<reference key="1">
    <citation type="journal article" date="2006" name="J. Bacteriol.">
        <title>Complete genome sequence of Yersinia pestis strains Antiqua and Nepal516: evidence of gene reduction in an emerging pathogen.</title>
        <authorList>
            <person name="Chain P.S.G."/>
            <person name="Hu P."/>
            <person name="Malfatti S.A."/>
            <person name="Radnedge L."/>
            <person name="Larimer F."/>
            <person name="Vergez L.M."/>
            <person name="Worsham P."/>
            <person name="Chu M.C."/>
            <person name="Andersen G.L."/>
        </authorList>
    </citation>
    <scope>NUCLEOTIDE SEQUENCE [LARGE SCALE GENOMIC DNA]</scope>
    <source>
        <strain>Nepal516</strain>
    </source>
</reference>
<reference key="2">
    <citation type="submission" date="2009-04" db="EMBL/GenBank/DDBJ databases">
        <title>Yersinia pestis Nepal516A whole genome shotgun sequencing project.</title>
        <authorList>
            <person name="Plunkett G. III"/>
            <person name="Anderson B.D."/>
            <person name="Baumler D.J."/>
            <person name="Burland V."/>
            <person name="Cabot E.L."/>
            <person name="Glasner J.D."/>
            <person name="Mau B."/>
            <person name="Neeno-Eckwall E."/>
            <person name="Perna N.T."/>
            <person name="Munk A.C."/>
            <person name="Tapia R."/>
            <person name="Green L.D."/>
            <person name="Rogers Y.C."/>
            <person name="Detter J.C."/>
            <person name="Bruce D.C."/>
            <person name="Brettin T.S."/>
        </authorList>
    </citation>
    <scope>NUCLEOTIDE SEQUENCE [LARGE SCALE GENOMIC DNA]</scope>
    <source>
        <strain>Nepal516</strain>
    </source>
</reference>
<comment type="function">
    <text evidence="1">Catalyzes the condensation of pantoate with beta-alanine in an ATP-dependent reaction via a pantoyl-adenylate intermediate.</text>
</comment>
<comment type="catalytic activity">
    <reaction evidence="1">
        <text>(R)-pantoate + beta-alanine + ATP = (R)-pantothenate + AMP + diphosphate + H(+)</text>
        <dbReference type="Rhea" id="RHEA:10912"/>
        <dbReference type="ChEBI" id="CHEBI:15378"/>
        <dbReference type="ChEBI" id="CHEBI:15980"/>
        <dbReference type="ChEBI" id="CHEBI:29032"/>
        <dbReference type="ChEBI" id="CHEBI:30616"/>
        <dbReference type="ChEBI" id="CHEBI:33019"/>
        <dbReference type="ChEBI" id="CHEBI:57966"/>
        <dbReference type="ChEBI" id="CHEBI:456215"/>
        <dbReference type="EC" id="6.3.2.1"/>
    </reaction>
</comment>
<comment type="pathway">
    <text evidence="1">Cofactor biosynthesis; (R)-pantothenate biosynthesis; (R)-pantothenate from (R)-pantoate and beta-alanine: step 1/1.</text>
</comment>
<comment type="subunit">
    <text evidence="1">Homodimer.</text>
</comment>
<comment type="subcellular location">
    <subcellularLocation>
        <location evidence="1">Cytoplasm</location>
    </subcellularLocation>
</comment>
<comment type="miscellaneous">
    <text evidence="1">The reaction proceeds by a bi uni uni bi ping pong mechanism.</text>
</comment>
<comment type="similarity">
    <text evidence="1">Belongs to the pantothenate synthetase family.</text>
</comment>
<evidence type="ECO:0000255" key="1">
    <source>
        <dbReference type="HAMAP-Rule" id="MF_00158"/>
    </source>
</evidence>
<organism>
    <name type="scientific">Yersinia pestis bv. Antiqua (strain Nepal516)</name>
    <dbReference type="NCBI Taxonomy" id="377628"/>
    <lineage>
        <taxon>Bacteria</taxon>
        <taxon>Pseudomonadati</taxon>
        <taxon>Pseudomonadota</taxon>
        <taxon>Gammaproteobacteria</taxon>
        <taxon>Enterobacterales</taxon>
        <taxon>Yersiniaceae</taxon>
        <taxon>Yersinia</taxon>
    </lineage>
</organism>
<proteinExistence type="inferred from homology"/>
<accession>Q1CLW1</accession>
<accession>C4GQ53</accession>
<protein>
    <recommendedName>
        <fullName evidence="1">Pantothenate synthetase</fullName>
        <shortName evidence="1">PS</shortName>
        <ecNumber evidence="1">6.3.2.1</ecNumber>
    </recommendedName>
    <alternativeName>
        <fullName evidence="1">Pantoate--beta-alanine ligase</fullName>
    </alternativeName>
    <alternativeName>
        <fullName evidence="1">Pantoate-activating enzyme</fullName>
    </alternativeName>
</protein>
<keyword id="KW-0067">ATP-binding</keyword>
<keyword id="KW-0963">Cytoplasm</keyword>
<keyword id="KW-0436">Ligase</keyword>
<keyword id="KW-0547">Nucleotide-binding</keyword>
<keyword id="KW-0566">Pantothenate biosynthesis</keyword>
<feature type="chain" id="PRO_0000305581" description="Pantothenate synthetase">
    <location>
        <begin position="1"/>
        <end position="284"/>
    </location>
</feature>
<feature type="active site" description="Proton donor" evidence="1">
    <location>
        <position position="37"/>
    </location>
</feature>
<feature type="binding site" evidence="1">
    <location>
        <begin position="30"/>
        <end position="37"/>
    </location>
    <ligand>
        <name>ATP</name>
        <dbReference type="ChEBI" id="CHEBI:30616"/>
    </ligand>
</feature>
<feature type="binding site" evidence="1">
    <location>
        <position position="61"/>
    </location>
    <ligand>
        <name>(R)-pantoate</name>
        <dbReference type="ChEBI" id="CHEBI:15980"/>
    </ligand>
</feature>
<feature type="binding site" evidence="1">
    <location>
        <position position="61"/>
    </location>
    <ligand>
        <name>beta-alanine</name>
        <dbReference type="ChEBI" id="CHEBI:57966"/>
    </ligand>
</feature>
<feature type="binding site" evidence="1">
    <location>
        <begin position="149"/>
        <end position="152"/>
    </location>
    <ligand>
        <name>ATP</name>
        <dbReference type="ChEBI" id="CHEBI:30616"/>
    </ligand>
</feature>
<feature type="binding site" evidence="1">
    <location>
        <position position="155"/>
    </location>
    <ligand>
        <name>(R)-pantoate</name>
        <dbReference type="ChEBI" id="CHEBI:15980"/>
    </ligand>
</feature>
<feature type="binding site" evidence="1">
    <location>
        <position position="178"/>
    </location>
    <ligand>
        <name>ATP</name>
        <dbReference type="ChEBI" id="CHEBI:30616"/>
    </ligand>
</feature>
<feature type="binding site" evidence="1">
    <location>
        <begin position="186"/>
        <end position="189"/>
    </location>
    <ligand>
        <name>ATP</name>
        <dbReference type="ChEBI" id="CHEBI:30616"/>
    </ligand>
</feature>
<sequence>MLIIETLPLLRQQIRRWRQEGKRIALVPTMGNLHEGHMTLVDEAKTRADVVVVTIFVNPLQFERPDDLAHYPRTLQEDCEKLTRHGADLVFAPAAADIYPAGLEKQTYVDVPALSTILEGASRPGHFRGVSTIVSKLFNLIQPDVACFGEKDYQQLALIRKMVADMGYDINIVGVPTVRAKDGLALSSRNGYLTEEERQIAPQLSKIMWALAEKMALGERQIDALLEEAAAQLLRVGFTPDELFIRDAETLQPLTVDSQQAVILMAAWLGKARLIDNQLVDLRH</sequence>
<gene>
    <name evidence="1" type="primary">panC</name>
    <name type="ordered locus">YPN_0687</name>
    <name type="ORF">YP516_0731</name>
</gene>
<name>PANC_YERPN</name>
<dbReference type="EC" id="6.3.2.1" evidence="1"/>
<dbReference type="EMBL" id="CP000305">
    <property type="protein sequence ID" value="ABG17019.1"/>
    <property type="molecule type" value="Genomic_DNA"/>
</dbReference>
<dbReference type="EMBL" id="ACNQ01000007">
    <property type="protein sequence ID" value="EEO77879.1"/>
    <property type="molecule type" value="Genomic_DNA"/>
</dbReference>
<dbReference type="RefSeq" id="WP_002209348.1">
    <property type="nucleotide sequence ID" value="NZ_ACNQ01000007.1"/>
</dbReference>
<dbReference type="SMR" id="Q1CLW1"/>
<dbReference type="GeneID" id="57975307"/>
<dbReference type="KEGG" id="ypn:YPN_0687"/>
<dbReference type="HOGENOM" id="CLU_047148_0_0_6"/>
<dbReference type="UniPathway" id="UPA00028">
    <property type="reaction ID" value="UER00005"/>
</dbReference>
<dbReference type="Proteomes" id="UP000008936">
    <property type="component" value="Chromosome"/>
</dbReference>
<dbReference type="GO" id="GO:0005829">
    <property type="term" value="C:cytosol"/>
    <property type="evidence" value="ECO:0007669"/>
    <property type="project" value="TreeGrafter"/>
</dbReference>
<dbReference type="GO" id="GO:0005524">
    <property type="term" value="F:ATP binding"/>
    <property type="evidence" value="ECO:0007669"/>
    <property type="project" value="UniProtKB-KW"/>
</dbReference>
<dbReference type="GO" id="GO:0004592">
    <property type="term" value="F:pantoate-beta-alanine ligase activity"/>
    <property type="evidence" value="ECO:0007669"/>
    <property type="project" value="UniProtKB-UniRule"/>
</dbReference>
<dbReference type="GO" id="GO:0015940">
    <property type="term" value="P:pantothenate biosynthetic process"/>
    <property type="evidence" value="ECO:0007669"/>
    <property type="project" value="UniProtKB-UniRule"/>
</dbReference>
<dbReference type="CDD" id="cd00560">
    <property type="entry name" value="PanC"/>
    <property type="match status" value="1"/>
</dbReference>
<dbReference type="FunFam" id="3.30.1300.10:FF:000001">
    <property type="entry name" value="Pantothenate synthetase"/>
    <property type="match status" value="1"/>
</dbReference>
<dbReference type="FunFam" id="3.40.50.620:FF:000013">
    <property type="entry name" value="Pantothenate synthetase"/>
    <property type="match status" value="1"/>
</dbReference>
<dbReference type="Gene3D" id="3.40.50.620">
    <property type="entry name" value="HUPs"/>
    <property type="match status" value="1"/>
</dbReference>
<dbReference type="Gene3D" id="3.30.1300.10">
    <property type="entry name" value="Pantoate-beta-alanine ligase, C-terminal domain"/>
    <property type="match status" value="1"/>
</dbReference>
<dbReference type="HAMAP" id="MF_00158">
    <property type="entry name" value="PanC"/>
    <property type="match status" value="1"/>
</dbReference>
<dbReference type="InterPro" id="IPR003721">
    <property type="entry name" value="Pantoate_ligase"/>
</dbReference>
<dbReference type="InterPro" id="IPR042176">
    <property type="entry name" value="Pantoate_ligase_C"/>
</dbReference>
<dbReference type="InterPro" id="IPR014729">
    <property type="entry name" value="Rossmann-like_a/b/a_fold"/>
</dbReference>
<dbReference type="NCBIfam" id="TIGR00018">
    <property type="entry name" value="panC"/>
    <property type="match status" value="1"/>
</dbReference>
<dbReference type="PANTHER" id="PTHR21299">
    <property type="entry name" value="CYTIDYLATE KINASE/PANTOATE-BETA-ALANINE LIGASE"/>
    <property type="match status" value="1"/>
</dbReference>
<dbReference type="PANTHER" id="PTHR21299:SF1">
    <property type="entry name" value="PANTOATE--BETA-ALANINE LIGASE"/>
    <property type="match status" value="1"/>
</dbReference>
<dbReference type="Pfam" id="PF02569">
    <property type="entry name" value="Pantoate_ligase"/>
    <property type="match status" value="1"/>
</dbReference>
<dbReference type="SUPFAM" id="SSF52374">
    <property type="entry name" value="Nucleotidylyl transferase"/>
    <property type="match status" value="1"/>
</dbReference>